<organism>
    <name type="scientific">Methanoculleus marisnigri (strain ATCC 35101 / DSM 1498 / JR1)</name>
    <dbReference type="NCBI Taxonomy" id="368407"/>
    <lineage>
        <taxon>Archaea</taxon>
        <taxon>Methanobacteriati</taxon>
        <taxon>Methanobacteriota</taxon>
        <taxon>Stenosarchaea group</taxon>
        <taxon>Methanomicrobia</taxon>
        <taxon>Methanomicrobiales</taxon>
        <taxon>Methanomicrobiaceae</taxon>
        <taxon>Methanoculleus</taxon>
    </lineage>
</organism>
<reference key="1">
    <citation type="journal article" date="2009" name="Stand. Genomic Sci.">
        <title>Complete genome sequence of Methanoculleus marisnigri Romesser et al. 1981 type strain JR1.</title>
        <authorList>
            <person name="Anderson I.J."/>
            <person name="Sieprawska-Lupa M."/>
            <person name="Lapidus A."/>
            <person name="Nolan M."/>
            <person name="Copeland A."/>
            <person name="Glavina Del Rio T."/>
            <person name="Tice H."/>
            <person name="Dalin E."/>
            <person name="Barry K."/>
            <person name="Saunders E."/>
            <person name="Han C."/>
            <person name="Brettin T."/>
            <person name="Detter J.C."/>
            <person name="Bruce D."/>
            <person name="Mikhailova N."/>
            <person name="Pitluck S."/>
            <person name="Hauser L."/>
            <person name="Land M."/>
            <person name="Lucas S."/>
            <person name="Richardson P."/>
            <person name="Whitman W.B."/>
            <person name="Kyrpides N.C."/>
        </authorList>
    </citation>
    <scope>NUCLEOTIDE SEQUENCE [LARGE SCALE GENOMIC DNA]</scope>
    <source>
        <strain>ATCC 35101 / DSM 1498 / JR1</strain>
    </source>
</reference>
<gene>
    <name evidence="1" type="primary">mch</name>
    <name type="ordered locus">Memar_0668</name>
</gene>
<accession>A3CTA1</accession>
<name>MCH_METMJ</name>
<sequence length="315" mass="34182">MLSVNELALDIFEELFEYAEELHAVPHELDNGARIVDCGVSTSGGYLTGRRFTEICMGGLGEVDISMGKIRDFPIPFIEVSTDFPSIACLGAQKAGWTVNVNKYFAMGSGPARALSLKPKHTYEVIEYEDEFDYAVICLESDHLPNAAVMENIAEACNVDVANTCAVVAPTASLVGSIQVAGRCVETAVYKLNELGFDTKKITAGIGHAPIAPVKKDGTKAMGSTNDATIYHGSIMLTMNAPEIKDYLDKIPSNKSKGYGKPFYDIFKEANFDFYQIDTSLFSPAEVVINELSEGKVYHVGAVNPEVTLKSFGFI</sequence>
<proteinExistence type="inferred from homology"/>
<protein>
    <recommendedName>
        <fullName evidence="1">Methenyltetrahydromethanopterin cyclohydrolase</fullName>
        <ecNumber evidence="1">3.5.4.27</ecNumber>
    </recommendedName>
    <alternativeName>
        <fullName evidence="1">Methenyl-H4MPT cyclohydrolase</fullName>
    </alternativeName>
</protein>
<feature type="chain" id="PRO_1000014402" description="Methenyltetrahydromethanopterin cyclohydrolase">
    <location>
        <begin position="1"/>
        <end position="315"/>
    </location>
</feature>
<keyword id="KW-0963">Cytoplasm</keyword>
<keyword id="KW-0378">Hydrolase</keyword>
<keyword id="KW-0484">Methanogenesis</keyword>
<keyword id="KW-0554">One-carbon metabolism</keyword>
<comment type="function">
    <text evidence="1">Catalyzes the reversible interconversion of 5-formyl-H(4)MPT to methenyl-H(4)MPT(+).</text>
</comment>
<comment type="catalytic activity">
    <reaction evidence="1">
        <text>5,10-methenyl-5,6,7,8-tetrahydromethanopterin + H2O = N(5)-formyl-5,6,7,8-tetrahydromethanopterin + H(+)</text>
        <dbReference type="Rhea" id="RHEA:19053"/>
        <dbReference type="ChEBI" id="CHEBI:15377"/>
        <dbReference type="ChEBI" id="CHEBI:15378"/>
        <dbReference type="ChEBI" id="CHEBI:58018"/>
        <dbReference type="ChEBI" id="CHEBI:58337"/>
        <dbReference type="EC" id="3.5.4.27"/>
    </reaction>
</comment>
<comment type="pathway">
    <text evidence="1">One-carbon metabolism; methanogenesis from CO(2); 5,10-methenyl-5,6,7,8-tetrahydromethanopterin from CO(2): step 3/3.</text>
</comment>
<comment type="subcellular location">
    <subcellularLocation>
        <location evidence="1">Cytoplasm</location>
    </subcellularLocation>
</comment>
<comment type="similarity">
    <text evidence="1">Belongs to the MCH family.</text>
</comment>
<dbReference type="EC" id="3.5.4.27" evidence="1"/>
<dbReference type="EMBL" id="CP000562">
    <property type="protein sequence ID" value="ABN56601.1"/>
    <property type="molecule type" value="Genomic_DNA"/>
</dbReference>
<dbReference type="RefSeq" id="WP_011843512.1">
    <property type="nucleotide sequence ID" value="NC_009051.1"/>
</dbReference>
<dbReference type="SMR" id="A3CTA1"/>
<dbReference type="STRING" id="368407.Memar_0668"/>
<dbReference type="GeneID" id="4848201"/>
<dbReference type="GeneID" id="76731240"/>
<dbReference type="KEGG" id="mem:Memar_0668"/>
<dbReference type="eggNOG" id="arCOG02675">
    <property type="taxonomic scope" value="Archaea"/>
</dbReference>
<dbReference type="HOGENOM" id="CLU_876031_0_0_2"/>
<dbReference type="OrthoDB" id="105468at2157"/>
<dbReference type="UniPathway" id="UPA00640">
    <property type="reaction ID" value="UER00694"/>
</dbReference>
<dbReference type="Proteomes" id="UP000002146">
    <property type="component" value="Chromosome"/>
</dbReference>
<dbReference type="GO" id="GO:0005737">
    <property type="term" value="C:cytoplasm"/>
    <property type="evidence" value="ECO:0007669"/>
    <property type="project" value="UniProtKB-SubCell"/>
</dbReference>
<dbReference type="GO" id="GO:0018759">
    <property type="term" value="F:methenyltetrahydromethanopterin cyclohydrolase activity"/>
    <property type="evidence" value="ECO:0007669"/>
    <property type="project" value="UniProtKB-UniRule"/>
</dbReference>
<dbReference type="GO" id="GO:0019386">
    <property type="term" value="P:methanogenesis, from carbon dioxide"/>
    <property type="evidence" value="ECO:0007669"/>
    <property type="project" value="UniProtKB-UniRule"/>
</dbReference>
<dbReference type="GO" id="GO:0006730">
    <property type="term" value="P:one-carbon metabolic process"/>
    <property type="evidence" value="ECO:0007669"/>
    <property type="project" value="UniProtKB-UniRule"/>
</dbReference>
<dbReference type="CDD" id="cd00545">
    <property type="entry name" value="MCH"/>
    <property type="match status" value="1"/>
</dbReference>
<dbReference type="Gene3D" id="3.10.340.11">
    <property type="entry name" value="Methenyltetrahydromethanopterin Cyclohydrolase, Chain A, domain 1"/>
    <property type="match status" value="1"/>
</dbReference>
<dbReference type="Gene3D" id="3.30.1030.10">
    <property type="entry name" value="Methenyltetrahydromethanopterin Cyclohydrolase, Chain A, domain 2"/>
    <property type="match status" value="1"/>
</dbReference>
<dbReference type="HAMAP" id="MF_00486">
    <property type="entry name" value="McH"/>
    <property type="match status" value="1"/>
</dbReference>
<dbReference type="InterPro" id="IPR003209">
    <property type="entry name" value="METHMP_CycHdrlase"/>
</dbReference>
<dbReference type="NCBIfam" id="TIGR03120">
    <property type="entry name" value="one_C_mch"/>
    <property type="match status" value="1"/>
</dbReference>
<dbReference type="Pfam" id="PF02289">
    <property type="entry name" value="MCH"/>
    <property type="match status" value="1"/>
</dbReference>
<dbReference type="SUPFAM" id="SSF56199">
    <property type="entry name" value="Methenyltetrahydromethanopterin cyclohydrolase"/>
    <property type="match status" value="1"/>
</dbReference>
<evidence type="ECO:0000255" key="1">
    <source>
        <dbReference type="HAMAP-Rule" id="MF_00486"/>
    </source>
</evidence>